<protein>
    <recommendedName>
        <fullName evidence="1">Ubiquinone/menaquinone biosynthesis C-methyltransferase UbiE</fullName>
        <ecNumber evidence="1">2.1.1.163</ecNumber>
        <ecNumber evidence="1">2.1.1.201</ecNumber>
    </recommendedName>
    <alternativeName>
        <fullName evidence="1">2-methoxy-6-polyprenyl-1,4-benzoquinol methylase</fullName>
    </alternativeName>
    <alternativeName>
        <fullName evidence="1">Demethylmenaquinone methyltransferase</fullName>
    </alternativeName>
</protein>
<gene>
    <name evidence="1" type="primary">ubiE</name>
    <name type="ordered locus">RT0675</name>
</gene>
<proteinExistence type="inferred from homology"/>
<comment type="function">
    <text evidence="1">Methyltransferase required for the conversion of demethylmenaquinol (DMKH2) to menaquinol (MKH2) and the conversion of 2-polyprenyl-6-methoxy-1,4-benzoquinol (DDMQH2) to 2-polyprenyl-3-methyl-6-methoxy-1,4-benzoquinol (DMQH2).</text>
</comment>
<comment type="catalytic activity">
    <reaction evidence="1">
        <text>a 2-demethylmenaquinol + S-adenosyl-L-methionine = a menaquinol + S-adenosyl-L-homocysteine + H(+)</text>
        <dbReference type="Rhea" id="RHEA:42640"/>
        <dbReference type="Rhea" id="RHEA-COMP:9539"/>
        <dbReference type="Rhea" id="RHEA-COMP:9563"/>
        <dbReference type="ChEBI" id="CHEBI:15378"/>
        <dbReference type="ChEBI" id="CHEBI:18151"/>
        <dbReference type="ChEBI" id="CHEBI:55437"/>
        <dbReference type="ChEBI" id="CHEBI:57856"/>
        <dbReference type="ChEBI" id="CHEBI:59789"/>
        <dbReference type="EC" id="2.1.1.163"/>
    </reaction>
</comment>
<comment type="catalytic activity">
    <reaction evidence="1">
        <text>a 2-methoxy-6-(all-trans-polyprenyl)benzene-1,4-diol + S-adenosyl-L-methionine = a 5-methoxy-2-methyl-3-(all-trans-polyprenyl)benzene-1,4-diol + S-adenosyl-L-homocysteine + H(+)</text>
        <dbReference type="Rhea" id="RHEA:28286"/>
        <dbReference type="Rhea" id="RHEA-COMP:10858"/>
        <dbReference type="Rhea" id="RHEA-COMP:10859"/>
        <dbReference type="ChEBI" id="CHEBI:15378"/>
        <dbReference type="ChEBI" id="CHEBI:57856"/>
        <dbReference type="ChEBI" id="CHEBI:59789"/>
        <dbReference type="ChEBI" id="CHEBI:84166"/>
        <dbReference type="ChEBI" id="CHEBI:84167"/>
        <dbReference type="EC" id="2.1.1.201"/>
    </reaction>
</comment>
<comment type="pathway">
    <text evidence="1">Quinol/quinone metabolism; menaquinone biosynthesis; menaquinol from 1,4-dihydroxy-2-naphthoate: step 2/2.</text>
</comment>
<comment type="pathway">
    <text evidence="1">Cofactor biosynthesis; ubiquinone biosynthesis.</text>
</comment>
<comment type="similarity">
    <text evidence="1">Belongs to the class I-like SAM-binding methyltransferase superfamily. MenG/UbiE family.</text>
</comment>
<accession>Q68W57</accession>
<reference key="1">
    <citation type="journal article" date="2004" name="J. Bacteriol.">
        <title>Complete genome sequence of Rickettsia typhi and comparison with sequences of other Rickettsiae.</title>
        <authorList>
            <person name="McLeod M.P."/>
            <person name="Qin X."/>
            <person name="Karpathy S.E."/>
            <person name="Gioia J."/>
            <person name="Highlander S.K."/>
            <person name="Fox G.E."/>
            <person name="McNeill T.Z."/>
            <person name="Jiang H."/>
            <person name="Muzny D."/>
            <person name="Jacob L.S."/>
            <person name="Hawes A.C."/>
            <person name="Sodergren E."/>
            <person name="Gill R."/>
            <person name="Hume J."/>
            <person name="Morgan M."/>
            <person name="Fan G."/>
            <person name="Amin A.G."/>
            <person name="Gibbs R.A."/>
            <person name="Hong C."/>
            <person name="Yu X.-J."/>
            <person name="Walker D.H."/>
            <person name="Weinstock G.M."/>
        </authorList>
    </citation>
    <scope>NUCLEOTIDE SEQUENCE [LARGE SCALE GENOMIC DNA]</scope>
    <source>
        <strain>ATCC VR-144 / Wilmington</strain>
    </source>
</reference>
<dbReference type="EC" id="2.1.1.163" evidence="1"/>
<dbReference type="EC" id="2.1.1.201" evidence="1"/>
<dbReference type="EMBL" id="AE017197">
    <property type="protein sequence ID" value="AAU04135.1"/>
    <property type="molecule type" value="Genomic_DNA"/>
</dbReference>
<dbReference type="RefSeq" id="WP_011191112.1">
    <property type="nucleotide sequence ID" value="NC_006142.1"/>
</dbReference>
<dbReference type="SMR" id="Q68W57"/>
<dbReference type="KEGG" id="rty:RT0675"/>
<dbReference type="eggNOG" id="COG2226">
    <property type="taxonomic scope" value="Bacteria"/>
</dbReference>
<dbReference type="HOGENOM" id="CLU_037990_0_1_5"/>
<dbReference type="OrthoDB" id="9808140at2"/>
<dbReference type="UniPathway" id="UPA00079">
    <property type="reaction ID" value="UER00169"/>
</dbReference>
<dbReference type="UniPathway" id="UPA00232"/>
<dbReference type="Proteomes" id="UP000000604">
    <property type="component" value="Chromosome"/>
</dbReference>
<dbReference type="GO" id="GO:0008425">
    <property type="term" value="F:2-methoxy-6-polyprenyl-1,4-benzoquinol methyltransferase activity"/>
    <property type="evidence" value="ECO:0007669"/>
    <property type="project" value="UniProtKB-UniRule"/>
</dbReference>
<dbReference type="GO" id="GO:0043770">
    <property type="term" value="F:demethylmenaquinone methyltransferase activity"/>
    <property type="evidence" value="ECO:0007669"/>
    <property type="project" value="UniProtKB-UniRule"/>
</dbReference>
<dbReference type="GO" id="GO:0009060">
    <property type="term" value="P:aerobic respiration"/>
    <property type="evidence" value="ECO:0007669"/>
    <property type="project" value="UniProtKB-UniRule"/>
</dbReference>
<dbReference type="GO" id="GO:0009234">
    <property type="term" value="P:menaquinone biosynthetic process"/>
    <property type="evidence" value="ECO:0007669"/>
    <property type="project" value="UniProtKB-UniRule"/>
</dbReference>
<dbReference type="GO" id="GO:0032259">
    <property type="term" value="P:methylation"/>
    <property type="evidence" value="ECO:0007669"/>
    <property type="project" value="UniProtKB-KW"/>
</dbReference>
<dbReference type="CDD" id="cd02440">
    <property type="entry name" value="AdoMet_MTases"/>
    <property type="match status" value="1"/>
</dbReference>
<dbReference type="FunFam" id="3.40.50.150:FF:000250">
    <property type="entry name" value="Ubiquinone/menaquinone biosynthesis C-methyltransferase UbiE"/>
    <property type="match status" value="1"/>
</dbReference>
<dbReference type="Gene3D" id="3.40.50.150">
    <property type="entry name" value="Vaccinia Virus protein VP39"/>
    <property type="match status" value="1"/>
</dbReference>
<dbReference type="HAMAP" id="MF_01813">
    <property type="entry name" value="MenG_UbiE_methyltr"/>
    <property type="match status" value="1"/>
</dbReference>
<dbReference type="InterPro" id="IPR029063">
    <property type="entry name" value="SAM-dependent_MTases_sf"/>
</dbReference>
<dbReference type="InterPro" id="IPR004033">
    <property type="entry name" value="UbiE/COQ5_MeTrFase"/>
</dbReference>
<dbReference type="InterPro" id="IPR023576">
    <property type="entry name" value="UbiE/COQ5_MeTrFase_CS"/>
</dbReference>
<dbReference type="NCBIfam" id="TIGR01934">
    <property type="entry name" value="MenG_MenH_UbiE"/>
    <property type="match status" value="1"/>
</dbReference>
<dbReference type="NCBIfam" id="NF001242">
    <property type="entry name" value="PRK00216.1-3"/>
    <property type="match status" value="1"/>
</dbReference>
<dbReference type="NCBIfam" id="NF001244">
    <property type="entry name" value="PRK00216.1-5"/>
    <property type="match status" value="1"/>
</dbReference>
<dbReference type="PANTHER" id="PTHR43591:SF24">
    <property type="entry name" value="2-METHOXY-6-POLYPRENYL-1,4-BENZOQUINOL METHYLASE, MITOCHONDRIAL"/>
    <property type="match status" value="1"/>
</dbReference>
<dbReference type="PANTHER" id="PTHR43591">
    <property type="entry name" value="METHYLTRANSFERASE"/>
    <property type="match status" value="1"/>
</dbReference>
<dbReference type="Pfam" id="PF01209">
    <property type="entry name" value="Ubie_methyltran"/>
    <property type="match status" value="1"/>
</dbReference>
<dbReference type="SUPFAM" id="SSF53335">
    <property type="entry name" value="S-adenosyl-L-methionine-dependent methyltransferases"/>
    <property type="match status" value="1"/>
</dbReference>
<dbReference type="PROSITE" id="PS51608">
    <property type="entry name" value="SAM_MT_UBIE"/>
    <property type="match status" value="1"/>
</dbReference>
<dbReference type="PROSITE" id="PS01183">
    <property type="entry name" value="UBIE_1"/>
    <property type="match status" value="1"/>
</dbReference>
<dbReference type="PROSITE" id="PS01184">
    <property type="entry name" value="UBIE_2"/>
    <property type="match status" value="1"/>
</dbReference>
<feature type="chain" id="PRO_0000193322" description="Ubiquinone/menaquinone biosynthesis C-methyltransferase UbiE">
    <location>
        <begin position="1"/>
        <end position="248"/>
    </location>
</feature>
<feature type="binding site" evidence="1">
    <location>
        <position position="68"/>
    </location>
    <ligand>
        <name>S-adenosyl-L-methionine</name>
        <dbReference type="ChEBI" id="CHEBI:59789"/>
    </ligand>
</feature>
<feature type="binding site" evidence="1">
    <location>
        <position position="92"/>
    </location>
    <ligand>
        <name>S-adenosyl-L-methionine</name>
        <dbReference type="ChEBI" id="CHEBI:59789"/>
    </ligand>
</feature>
<feature type="binding site" evidence="1">
    <location>
        <begin position="120"/>
        <end position="121"/>
    </location>
    <ligand>
        <name>S-adenosyl-L-methionine</name>
        <dbReference type="ChEBI" id="CHEBI:59789"/>
    </ligand>
</feature>
<name>UBIE_RICTY</name>
<organism>
    <name type="scientific">Rickettsia typhi (strain ATCC VR-144 / Wilmington)</name>
    <dbReference type="NCBI Taxonomy" id="257363"/>
    <lineage>
        <taxon>Bacteria</taxon>
        <taxon>Pseudomonadati</taxon>
        <taxon>Pseudomonadota</taxon>
        <taxon>Alphaproteobacteria</taxon>
        <taxon>Rickettsiales</taxon>
        <taxon>Rickettsiaceae</taxon>
        <taxon>Rickettsieae</taxon>
        <taxon>Rickettsia</taxon>
        <taxon>typhus group</taxon>
    </lineage>
</organism>
<keyword id="KW-0474">Menaquinone biosynthesis</keyword>
<keyword id="KW-0489">Methyltransferase</keyword>
<keyword id="KW-0949">S-adenosyl-L-methionine</keyword>
<keyword id="KW-0808">Transferase</keyword>
<keyword id="KW-0831">Ubiquinone biosynthesis</keyword>
<sequence>MHQTNFGFNKVDYTKKQWLVNNIFSRVADKYDLMNDLMSIGLHRLWKNEFIMQIPNLNSNILDVASGSGDIALQLAKKAKARGNNISLILSDINEEMLNNAKKKSIDLNLFQNMKFIVANAEELPFLDNSFDYYTIAFGIRNVPDINKALKEAYRVLKPMGKFICLEFSKVKEGILKDFYKFYSFTIIPSIGQIIARNKEAYEYLVESIALFPSQDDFRIMIKASGFEEVHYKNLSGGIVAIHSAYKI</sequence>
<evidence type="ECO:0000255" key="1">
    <source>
        <dbReference type="HAMAP-Rule" id="MF_01813"/>
    </source>
</evidence>